<organism evidence="7">
    <name type="scientific">Caenorhabditis elegans</name>
    <dbReference type="NCBI Taxonomy" id="6239"/>
    <lineage>
        <taxon>Eukaryota</taxon>
        <taxon>Metazoa</taxon>
        <taxon>Ecdysozoa</taxon>
        <taxon>Nematoda</taxon>
        <taxon>Chromadorea</taxon>
        <taxon>Rhabditida</taxon>
        <taxon>Rhabditina</taxon>
        <taxon>Rhabditomorpha</taxon>
        <taxon>Rhabditoidea</taxon>
        <taxon>Rhabditidae</taxon>
        <taxon>Peloderinae</taxon>
        <taxon>Caenorhabditis</taxon>
    </lineage>
</organism>
<accession>Q9XXD1</accession>
<accession>Q6EUU0</accession>
<sequence length="503" mass="56966">MNSAIMQGAAMATSHGIARLNRHNAQRNHFHIPTANRLFYQLQTPCTSTEEERRTVQTDDVAEIGMQRPDYQMYCGEEEISEQFVKLNVGGQRFMLRKDTIRRRGVGRLLDLINKPVADSNADAFFSSTSEFYFERPPSLFHIVYQFYLNGVIHQPSNLCPVDIIEELEYWRIIPDQYLASCCCAQQIDDDDEEVEEQDKPNLFKTLRFGEIRRCVWNIIEEPASSGKAQAFAVCSVVFVLISISGLVLGSLPELQVATKQRNNLTGEEFTEMEPMPILGYIEYVCIVWFTMEYGLKMLVSAERSKTFRQLLNIIDLLAILPFIIEMLLLIFGISTEQLRDLKGAFLVIRILRVLRVIRVLKLGRYSSGLQMFGKTLKASFRQLGMMAMVVMTGVIFFSTLVYFLEKDEPASKFHSIPAACWWCIVTMTTVGYGDLTPVTVPGKLVATGAIACGVLVLALPITIIVDNFMKVAETERPAGGNRYRTSQYPKATKSEQMILKVT</sequence>
<keyword id="KW-0025">Alternative splicing</keyword>
<keyword id="KW-1003">Cell membrane</keyword>
<keyword id="KW-0966">Cell projection</keyword>
<keyword id="KW-0325">Glycoprotein</keyword>
<keyword id="KW-0407">Ion channel</keyword>
<keyword id="KW-0406">Ion transport</keyword>
<keyword id="KW-0472">Membrane</keyword>
<keyword id="KW-0630">Potassium</keyword>
<keyword id="KW-0631">Potassium channel</keyword>
<keyword id="KW-0633">Potassium transport</keyword>
<keyword id="KW-1185">Reference proteome</keyword>
<keyword id="KW-0812">Transmembrane</keyword>
<keyword id="KW-1133">Transmembrane helix</keyword>
<keyword id="KW-0813">Transport</keyword>
<keyword id="KW-0851">Voltage-gated channel</keyword>
<reference evidence="7" key="1">
    <citation type="journal article" date="1998" name="Science">
        <title>Genome sequence of the nematode C. elegans: a platform for investigating biology.</title>
        <authorList>
            <consortium name="The C. elegans sequencing consortium"/>
        </authorList>
    </citation>
    <scope>NUCLEOTIDE SEQUENCE [LARGE SCALE GENOMIC DNA]</scope>
    <source>
        <strain evidence="7">Bristol N2</strain>
    </source>
</reference>
<reference evidence="5" key="2">
    <citation type="journal article" date="2016" name="FEBS Lett.">
        <title>A novel bipartite UNC-101/AP-1 mu1 binding signal mediates KVS-4/Kv2.1 somatodendritic distribution in Caenorhabditis elegans.</title>
        <authorList>
            <person name="Zhou X."/>
            <person name="Zeng J."/>
            <person name="Ouyang C."/>
            <person name="Luo Q."/>
            <person name="Yu M."/>
            <person name="Yang Z."/>
            <person name="Wang H."/>
            <person name="Shen K."/>
            <person name="Shi A."/>
        </authorList>
    </citation>
    <scope>INTERACTION WITH UNC-101</scope>
    <scope>SUBCELLULAR LOCATION</scope>
    <scope>TISSUE SPECIFICITY</scope>
    <scope>DOMAIN</scope>
    <scope>MUTAGENESIS OF 217-TRP--GLU-221; 217-TRP--ILE-219; ILE-219; 496-GLU--LEU-500 AND 497-GLN--MET-498</scope>
</reference>
<dbReference type="EMBL" id="BX284603">
    <property type="protein sequence ID" value="CAA19530.3"/>
    <property type="molecule type" value="Genomic_DNA"/>
</dbReference>
<dbReference type="EMBL" id="BX284603">
    <property type="protein sequence ID" value="CAH04760.1"/>
    <property type="molecule type" value="Genomic_DNA"/>
</dbReference>
<dbReference type="PIR" id="T26983">
    <property type="entry name" value="T26983"/>
</dbReference>
<dbReference type="RefSeq" id="NP_001022888.1">
    <molecule id="Q9XXD1-1"/>
    <property type="nucleotide sequence ID" value="NM_001027717.3"/>
</dbReference>
<dbReference type="RefSeq" id="NP_001022889.1">
    <property type="nucleotide sequence ID" value="NM_001027718.3"/>
</dbReference>
<dbReference type="SMR" id="Q9XXD1"/>
<dbReference type="FunCoup" id="Q9XXD1">
    <property type="interactions" value="13"/>
</dbReference>
<dbReference type="IntAct" id="Q9XXD1">
    <property type="interactions" value="1"/>
</dbReference>
<dbReference type="MINT" id="Q9XXD1"/>
<dbReference type="STRING" id="6239.Y48A6B.6b.1"/>
<dbReference type="GlyCosmos" id="Q9XXD1">
    <property type="glycosylation" value="1 site, No reported glycans"/>
</dbReference>
<dbReference type="PaxDb" id="6239-Y48A6B.6b"/>
<dbReference type="EnsemblMetazoa" id="Y48A6B.6a.1">
    <molecule id="Q9XXD1-1"/>
    <property type="protein sequence ID" value="Y48A6B.6a.1"/>
    <property type="gene ID" value="WBGene00012967"/>
</dbReference>
<dbReference type="EnsemblMetazoa" id="Y48A6B.6b.1">
    <property type="protein sequence ID" value="Y48A6B.6b.1"/>
    <property type="gene ID" value="WBGene00012967"/>
</dbReference>
<dbReference type="GeneID" id="190011"/>
<dbReference type="KEGG" id="cel:CELE_Y48A6B.6"/>
<dbReference type="UCSC" id="Y48A6B.6b">
    <property type="organism name" value="c. elegans"/>
</dbReference>
<dbReference type="AGR" id="WB:WBGene00012967"/>
<dbReference type="CTD" id="190011"/>
<dbReference type="WormBase" id="Y48A6B.6a">
    <molecule id="Q9XXD1-1"/>
    <property type="protein sequence ID" value="CE36457"/>
    <property type="gene ID" value="WBGene00012967"/>
    <property type="gene designation" value="kvs-4"/>
</dbReference>
<dbReference type="WormBase" id="Y48A6B.6b">
    <molecule id="Q9XXD1-2"/>
    <property type="protein sequence ID" value="CE32077"/>
    <property type="gene ID" value="WBGene00012967"/>
    <property type="gene designation" value="kvs-4"/>
</dbReference>
<dbReference type="eggNOG" id="KOG3713">
    <property type="taxonomic scope" value="Eukaryota"/>
</dbReference>
<dbReference type="HOGENOM" id="CLU_011722_4_1_1"/>
<dbReference type="InParanoid" id="Q9XXD1"/>
<dbReference type="OMA" id="SIMATSH"/>
<dbReference type="OrthoDB" id="296522at2759"/>
<dbReference type="Reactome" id="R-CEL-381676">
    <property type="pathway name" value="Glucagon-like Peptide-1 (GLP1) regulates insulin secretion"/>
</dbReference>
<dbReference type="SignaLink" id="Q9XXD1"/>
<dbReference type="PRO" id="PR:Q9XXD1"/>
<dbReference type="Proteomes" id="UP000001940">
    <property type="component" value="Chromosome III"/>
</dbReference>
<dbReference type="Bgee" id="WBGene00012967">
    <property type="expression patterns" value="Expressed in larva and 1 other cell type or tissue"/>
</dbReference>
<dbReference type="GO" id="GO:0030424">
    <property type="term" value="C:axon"/>
    <property type="evidence" value="ECO:0007669"/>
    <property type="project" value="UniProtKB-SubCell"/>
</dbReference>
<dbReference type="GO" id="GO:0030425">
    <property type="term" value="C:dendrite"/>
    <property type="evidence" value="ECO:0007669"/>
    <property type="project" value="UniProtKB-SubCell"/>
</dbReference>
<dbReference type="GO" id="GO:0016020">
    <property type="term" value="C:membrane"/>
    <property type="evidence" value="ECO:0000318"/>
    <property type="project" value="GO_Central"/>
</dbReference>
<dbReference type="GO" id="GO:0043204">
    <property type="term" value="C:perikaryon"/>
    <property type="evidence" value="ECO:0007669"/>
    <property type="project" value="UniProtKB-SubCell"/>
</dbReference>
<dbReference type="GO" id="GO:0008076">
    <property type="term" value="C:voltage-gated potassium channel complex"/>
    <property type="evidence" value="ECO:0000318"/>
    <property type="project" value="GO_Central"/>
</dbReference>
<dbReference type="GO" id="GO:0015459">
    <property type="term" value="F:potassium channel regulator activity"/>
    <property type="evidence" value="ECO:0000318"/>
    <property type="project" value="GO_Central"/>
</dbReference>
<dbReference type="GO" id="GO:0005249">
    <property type="term" value="F:voltage-gated potassium channel activity"/>
    <property type="evidence" value="ECO:0007669"/>
    <property type="project" value="InterPro"/>
</dbReference>
<dbReference type="GO" id="GO:0001508">
    <property type="term" value="P:action potential"/>
    <property type="evidence" value="ECO:0000318"/>
    <property type="project" value="GO_Central"/>
</dbReference>
<dbReference type="GO" id="GO:0007616">
    <property type="term" value="P:long-term memory"/>
    <property type="evidence" value="ECO:0000315"/>
    <property type="project" value="UniProtKB"/>
</dbReference>
<dbReference type="GO" id="GO:0071805">
    <property type="term" value="P:potassium ion transmembrane transport"/>
    <property type="evidence" value="ECO:0000318"/>
    <property type="project" value="GO_Central"/>
</dbReference>
<dbReference type="GO" id="GO:0051260">
    <property type="term" value="P:protein homooligomerization"/>
    <property type="evidence" value="ECO:0007669"/>
    <property type="project" value="InterPro"/>
</dbReference>
<dbReference type="CDD" id="cd18317">
    <property type="entry name" value="BTB_POZ_Kv"/>
    <property type="match status" value="1"/>
</dbReference>
<dbReference type="FunFam" id="1.20.120.350:FF:000070">
    <property type="entry name" value="K+ channel tetramerization domain protein"/>
    <property type="match status" value="1"/>
</dbReference>
<dbReference type="FunFam" id="1.10.287.70:FF:000005">
    <property type="entry name" value="potassium voltage-gated channel subfamily G member 1"/>
    <property type="match status" value="1"/>
</dbReference>
<dbReference type="Gene3D" id="1.10.287.70">
    <property type="match status" value="1"/>
</dbReference>
<dbReference type="Gene3D" id="3.30.710.10">
    <property type="entry name" value="Potassium Channel Kv1.1, Chain A"/>
    <property type="match status" value="1"/>
</dbReference>
<dbReference type="Gene3D" id="1.20.120.350">
    <property type="entry name" value="Voltage-gated potassium channels. Chain C"/>
    <property type="match status" value="1"/>
</dbReference>
<dbReference type="InterPro" id="IPR005821">
    <property type="entry name" value="Ion_trans_dom"/>
</dbReference>
<dbReference type="InterPro" id="IPR003968">
    <property type="entry name" value="K_chnl_volt-dep_Kv"/>
</dbReference>
<dbReference type="InterPro" id="IPR003971">
    <property type="entry name" value="K_chnl_volt-dep_Kv5/Kv9"/>
</dbReference>
<dbReference type="InterPro" id="IPR011333">
    <property type="entry name" value="SKP1/BTB/POZ_sf"/>
</dbReference>
<dbReference type="InterPro" id="IPR003131">
    <property type="entry name" value="T1-type_BTB"/>
</dbReference>
<dbReference type="InterPro" id="IPR028325">
    <property type="entry name" value="VG_K_chnl"/>
</dbReference>
<dbReference type="InterPro" id="IPR027359">
    <property type="entry name" value="Volt_channel_dom_sf"/>
</dbReference>
<dbReference type="PANTHER" id="PTHR11537:SF254">
    <property type="entry name" value="POTASSIUM VOLTAGE-GATED CHANNEL PROTEIN SHAB"/>
    <property type="match status" value="1"/>
</dbReference>
<dbReference type="PANTHER" id="PTHR11537">
    <property type="entry name" value="VOLTAGE-GATED POTASSIUM CHANNEL"/>
    <property type="match status" value="1"/>
</dbReference>
<dbReference type="Pfam" id="PF02214">
    <property type="entry name" value="BTB_2"/>
    <property type="match status" value="1"/>
</dbReference>
<dbReference type="Pfam" id="PF00520">
    <property type="entry name" value="Ion_trans"/>
    <property type="match status" value="1"/>
</dbReference>
<dbReference type="PRINTS" id="PR00169">
    <property type="entry name" value="KCHANNEL"/>
</dbReference>
<dbReference type="PRINTS" id="PR01494">
    <property type="entry name" value="KV9CHANNEL"/>
</dbReference>
<dbReference type="PRINTS" id="PR01491">
    <property type="entry name" value="KVCHANNEL"/>
</dbReference>
<dbReference type="SUPFAM" id="SSF54695">
    <property type="entry name" value="POZ domain"/>
    <property type="match status" value="1"/>
</dbReference>
<dbReference type="SUPFAM" id="SSF81324">
    <property type="entry name" value="Voltage-gated potassium channels"/>
    <property type="match status" value="1"/>
</dbReference>
<feature type="chain" id="PRO_0000440898" description="Probable voltage-gated potassium channel subunit kvs-4" evidence="5">
    <location>
        <begin position="1"/>
        <end position="503"/>
    </location>
</feature>
<feature type="topological domain" description="Cytoplasmic" evidence="5">
    <location>
        <begin position="1"/>
        <end position="231"/>
    </location>
</feature>
<feature type="transmembrane region" description="Helical; Name=Segment S1" evidence="2">
    <location>
        <begin position="232"/>
        <end position="252"/>
    </location>
</feature>
<feature type="topological domain" description="Extracellular" evidence="5">
    <location>
        <begin position="253"/>
        <end position="275"/>
    </location>
</feature>
<feature type="transmembrane region" description="Helical; Name=Segment S2" evidence="2">
    <location>
        <begin position="276"/>
        <end position="296"/>
    </location>
</feature>
<feature type="topological domain" description="Cytoplasmic" evidence="5">
    <location>
        <begin position="297"/>
        <end position="313"/>
    </location>
</feature>
<feature type="transmembrane region" description="Helical; Name=Segment S3" evidence="2">
    <location>
        <begin position="314"/>
        <end position="334"/>
    </location>
</feature>
<feature type="topological domain" description="Extracellular" evidence="5">
    <location>
        <begin position="335"/>
        <end position="346"/>
    </location>
</feature>
<feature type="transmembrane region" description="Helical; Voltage-sensor; Name=Segment S4" evidence="1">
    <location>
        <begin position="347"/>
        <end position="366"/>
    </location>
</feature>
<feature type="topological domain" description="Cytoplasmic" evidence="5">
    <location>
        <begin position="367"/>
        <end position="383"/>
    </location>
</feature>
<feature type="transmembrane region" description="Helical; Name=Segment S5" evidence="2">
    <location>
        <begin position="384"/>
        <end position="404"/>
    </location>
</feature>
<feature type="topological domain" description="Extracellular" evidence="5">
    <location>
        <begin position="405"/>
        <end position="417"/>
    </location>
</feature>
<feature type="intramembrane region" description="Helical; Name=Pore helix" evidence="1">
    <location>
        <begin position="418"/>
        <end position="429"/>
    </location>
</feature>
<feature type="intramembrane region" evidence="1">
    <location>
        <begin position="430"/>
        <end position="434"/>
    </location>
</feature>
<feature type="topological domain" description="Extracellular" evidence="5">
    <location>
        <begin position="435"/>
        <end position="445"/>
    </location>
</feature>
<feature type="transmembrane region" description="Helical; Name=Segment S6" evidence="2">
    <location>
        <begin position="446"/>
        <end position="466"/>
    </location>
</feature>
<feature type="topological domain" description="Cytoplasmic" evidence="5">
    <location>
        <begin position="467"/>
        <end position="503"/>
    </location>
</feature>
<feature type="region of interest" description="S4-S5 linker" evidence="1">
    <location>
        <begin position="368"/>
        <end position="383"/>
    </location>
</feature>
<feature type="short sequence motif" description="Required for dendritic localization" evidence="4">
    <location>
        <begin position="217"/>
        <end position="219"/>
    </location>
</feature>
<feature type="short sequence motif" description="Selectivity filter" evidence="1">
    <location>
        <begin position="430"/>
        <end position="435"/>
    </location>
</feature>
<feature type="short sequence motif" description="Required for dendritic localization" evidence="4">
    <location>
        <begin position="496"/>
        <end position="500"/>
    </location>
</feature>
<feature type="glycosylation site" description="N-linked (GlcNAc...) asparagine" evidence="3">
    <location>
        <position position="264"/>
    </location>
</feature>
<feature type="splice variant" id="VSP_059007" description="In isoform b.">
    <original>MNSAIMQGAAMATSHGIARLNRHNAQRNHFHIPTANRLFYQLQTPCT</original>
    <variation>MSHQASHFGVKKKWKANGSSGGGGLSAFARMKPVLDPSADRIWTIGQIIYQRHQAFNRNSAIKSQDNGSFDYIDMVSQSSLDR</variation>
    <location>
        <begin position="1"/>
        <end position="47"/>
    </location>
</feature>
<feature type="splice variant" id="VSP_059008" description="In isoform b.">
    <location>
        <begin position="452"/>
        <end position="478"/>
    </location>
</feature>
<feature type="mutagenesis site" description="Disrupts dendritic localization." evidence="4">
    <original>WNIIE</original>
    <variation>AAAAA</variation>
    <location>
        <begin position="217"/>
        <end position="221"/>
    </location>
</feature>
<feature type="mutagenesis site" description="Disrupts dendritic localization." evidence="4">
    <original>WNI</original>
    <variation>ANA</variation>
    <location>
        <begin position="217"/>
        <end position="219"/>
    </location>
</feature>
<feature type="mutagenesis site" description="Disrupts dendritic localization." evidence="4">
    <original>I</original>
    <variation>A</variation>
    <location>
        <position position="219"/>
    </location>
</feature>
<feature type="mutagenesis site" description="Disrupts dendritic localization." evidence="4">
    <original>EQMIL</original>
    <variation>AAAAA</variation>
    <location>
        <begin position="496"/>
        <end position="500"/>
    </location>
</feature>
<feature type="mutagenesis site" description="Disrupts dendritic localization." evidence="4">
    <original>QM</original>
    <variation>AA</variation>
    <location>
        <begin position="497"/>
        <end position="498"/>
    </location>
</feature>
<comment type="function">
    <text evidence="1">Voltage-gated potassium channel that mediates transmembrane potassium transport in excitable membranes.</text>
</comment>
<comment type="subunit">
    <text evidence="4 5">Homotetramer or heterotetramer (Probable). Interacts with unc-101 (via N-terminus); which targets kvs-4 to dendrites (PubMed:26762178).</text>
</comment>
<comment type="subcellular location">
    <subcellularLocation>
        <location evidence="5">Cell membrane</location>
        <topology evidence="2">Multi-pass membrane protein</topology>
    </subcellularLocation>
    <subcellularLocation>
        <location evidence="4">Perikaryon</location>
    </subcellularLocation>
    <subcellularLocation>
        <location evidence="4">Cell projection</location>
        <location evidence="4">Axon</location>
    </subcellularLocation>
    <subcellularLocation>
        <location evidence="4">Cell projection</location>
        <location evidence="4">Dendrite</location>
    </subcellularLocation>
    <text evidence="6">Association with unc-101 is required for dendritic localization.</text>
</comment>
<comment type="alternative products">
    <event type="alternative splicing"/>
    <isoform>
        <id>Q9XXD1-1</id>
        <name evidence="8">a</name>
        <sequence type="displayed"/>
    </isoform>
    <isoform>
        <id>Q9XXD1-2</id>
        <name evidence="9">b</name>
        <sequence type="described" ref="VSP_059007 VSP_059008"/>
    </isoform>
</comment>
<comment type="tissue specificity">
    <text evidence="4">Expressed in the cholinergic motor neuron DA9, mechanosensory neurons ALM and PLM, and the interneuron PVPL.</text>
</comment>
<comment type="domain">
    <text evidence="1">The transmembrane segment S4 functions as a voltage-sensor and is characterized by a series of positively charged amino acids at every third position. Channel opening and closing is effected by a conformation change that affects the position and orientation of the voltage-sensor paddle formed by S3 and S4 within the membrane. A transmembrane electric field that is positive inside would push the positively charged S4 segment outwards, thereby opening the pore, while a field that is negative inside would pull the S4 segment inwards and close the pore. Changes in the position and orientation of S4 are then transmitted to the activation gate formed by the inner helix bundle via the S4-S5 linker region.</text>
</comment>
<comment type="domain">
    <text evidence="4">The EQMIL and WNIIE motifs are required for dendritic localization.</text>
</comment>
<comment type="similarity">
    <text evidence="5">Belongs to the potassium channel family. B (Shab) (TC 1.A.1.2) subfamily. Kv2.2/KCNB2 sub-subfamily.</text>
</comment>
<proteinExistence type="evidence at protein level"/>
<evidence type="ECO:0000250" key="1">
    <source>
        <dbReference type="UniProtKB" id="P63142"/>
    </source>
</evidence>
<evidence type="ECO:0000255" key="2"/>
<evidence type="ECO:0000255" key="3">
    <source>
        <dbReference type="PROSITE-ProRule" id="PRU00498"/>
    </source>
</evidence>
<evidence type="ECO:0000269" key="4">
    <source>
    </source>
</evidence>
<evidence type="ECO:0000305" key="5"/>
<evidence type="ECO:0000305" key="6">
    <source>
    </source>
</evidence>
<evidence type="ECO:0000312" key="7">
    <source>
        <dbReference type="Proteomes" id="UP000001940"/>
    </source>
</evidence>
<evidence type="ECO:0000312" key="8">
    <source>
        <dbReference type="WormBase" id="Y48A6B.6a"/>
    </source>
</evidence>
<evidence type="ECO:0000312" key="9">
    <source>
        <dbReference type="WormBase" id="Y48A6B.6b"/>
    </source>
</evidence>
<name>KVS4_CAEEL</name>
<gene>
    <name evidence="8" type="primary">kvs-4</name>
    <name evidence="8" type="ORF">Y48A6B.6</name>
</gene>
<protein>
    <recommendedName>
        <fullName evidence="5">Probable voltage-gated potassium channel subunit kvs-4</fullName>
    </recommendedName>
</protein>